<protein>
    <recommendedName>
        <fullName evidence="1">Small ribosomal subunit protein bS6</fullName>
    </recommendedName>
    <alternativeName>
        <fullName evidence="2">30S ribosomal protein S6</fullName>
    </alternativeName>
</protein>
<feature type="chain" id="PRO_1000205394" description="Small ribosomal subunit protein bS6">
    <location>
        <begin position="1"/>
        <end position="102"/>
    </location>
</feature>
<name>RS6_SOLM1</name>
<keyword id="KW-0687">Ribonucleoprotein</keyword>
<keyword id="KW-0689">Ribosomal protein</keyword>
<keyword id="KW-0694">RNA-binding</keyword>
<keyword id="KW-0699">rRNA-binding</keyword>
<gene>
    <name evidence="1" type="primary">rpsF</name>
    <name type="ordered locus">DMR_27040</name>
</gene>
<proteinExistence type="inferred from homology"/>
<evidence type="ECO:0000255" key="1">
    <source>
        <dbReference type="HAMAP-Rule" id="MF_00360"/>
    </source>
</evidence>
<evidence type="ECO:0000305" key="2"/>
<sequence length="102" mass="11620">MRKYEALLLLSPELATDNRQEIVENLKGVLERQGTTMLSVDEWGMKDLAYPVQKKTRGHYTRFEFAAPATAIAEFERIVRITDGVMKFITVKLADKYVPEGA</sequence>
<reference key="1">
    <citation type="journal article" date="2009" name="Genome Res.">
        <title>Whole genome sequence of Desulfovibrio magneticus strain RS-1 revealed common gene clusters in magnetotactic bacteria.</title>
        <authorList>
            <person name="Nakazawa H."/>
            <person name="Arakaki A."/>
            <person name="Narita-Yamada S."/>
            <person name="Yashiro I."/>
            <person name="Jinno K."/>
            <person name="Aoki N."/>
            <person name="Tsuruyama A."/>
            <person name="Okamura Y."/>
            <person name="Tanikawa S."/>
            <person name="Fujita N."/>
            <person name="Takeyama H."/>
            <person name="Matsunaga T."/>
        </authorList>
    </citation>
    <scope>NUCLEOTIDE SEQUENCE [LARGE SCALE GENOMIC DNA]</scope>
    <source>
        <strain>ATCC 700980 / DSM 13731 / RS-1</strain>
    </source>
</reference>
<dbReference type="EMBL" id="AP010904">
    <property type="protein sequence ID" value="BAH76195.1"/>
    <property type="molecule type" value="Genomic_DNA"/>
</dbReference>
<dbReference type="RefSeq" id="WP_006921087.1">
    <property type="nucleotide sequence ID" value="NC_012796.1"/>
</dbReference>
<dbReference type="SMR" id="C4XGN7"/>
<dbReference type="STRING" id="573370.DMR_27040"/>
<dbReference type="KEGG" id="dma:DMR_27040"/>
<dbReference type="eggNOG" id="COG0360">
    <property type="taxonomic scope" value="Bacteria"/>
</dbReference>
<dbReference type="HOGENOM" id="CLU_113441_5_1_7"/>
<dbReference type="OrthoDB" id="9812702at2"/>
<dbReference type="Proteomes" id="UP000009071">
    <property type="component" value="Chromosome"/>
</dbReference>
<dbReference type="GO" id="GO:0005737">
    <property type="term" value="C:cytoplasm"/>
    <property type="evidence" value="ECO:0007669"/>
    <property type="project" value="UniProtKB-ARBA"/>
</dbReference>
<dbReference type="GO" id="GO:1990904">
    <property type="term" value="C:ribonucleoprotein complex"/>
    <property type="evidence" value="ECO:0007669"/>
    <property type="project" value="UniProtKB-KW"/>
</dbReference>
<dbReference type="GO" id="GO:0005840">
    <property type="term" value="C:ribosome"/>
    <property type="evidence" value="ECO:0007669"/>
    <property type="project" value="UniProtKB-KW"/>
</dbReference>
<dbReference type="GO" id="GO:0070181">
    <property type="term" value="F:small ribosomal subunit rRNA binding"/>
    <property type="evidence" value="ECO:0007669"/>
    <property type="project" value="TreeGrafter"/>
</dbReference>
<dbReference type="GO" id="GO:0003735">
    <property type="term" value="F:structural constituent of ribosome"/>
    <property type="evidence" value="ECO:0007669"/>
    <property type="project" value="InterPro"/>
</dbReference>
<dbReference type="GO" id="GO:0006412">
    <property type="term" value="P:translation"/>
    <property type="evidence" value="ECO:0007669"/>
    <property type="project" value="UniProtKB-UniRule"/>
</dbReference>
<dbReference type="CDD" id="cd00473">
    <property type="entry name" value="bS6"/>
    <property type="match status" value="1"/>
</dbReference>
<dbReference type="Gene3D" id="3.30.70.60">
    <property type="match status" value="1"/>
</dbReference>
<dbReference type="HAMAP" id="MF_00360">
    <property type="entry name" value="Ribosomal_bS6"/>
    <property type="match status" value="1"/>
</dbReference>
<dbReference type="InterPro" id="IPR000529">
    <property type="entry name" value="Ribosomal_bS6"/>
</dbReference>
<dbReference type="InterPro" id="IPR035980">
    <property type="entry name" value="Ribosomal_bS6_sf"/>
</dbReference>
<dbReference type="InterPro" id="IPR020814">
    <property type="entry name" value="Ribosomal_S6_plastid/chlpt"/>
</dbReference>
<dbReference type="InterPro" id="IPR014717">
    <property type="entry name" value="Transl_elong_EF1B/ribsomal_bS6"/>
</dbReference>
<dbReference type="NCBIfam" id="TIGR00166">
    <property type="entry name" value="S6"/>
    <property type="match status" value="1"/>
</dbReference>
<dbReference type="PANTHER" id="PTHR21011">
    <property type="entry name" value="MITOCHONDRIAL 28S RIBOSOMAL PROTEIN S6"/>
    <property type="match status" value="1"/>
</dbReference>
<dbReference type="PANTHER" id="PTHR21011:SF1">
    <property type="entry name" value="SMALL RIBOSOMAL SUBUNIT PROTEIN BS6M"/>
    <property type="match status" value="1"/>
</dbReference>
<dbReference type="Pfam" id="PF01250">
    <property type="entry name" value="Ribosomal_S6"/>
    <property type="match status" value="1"/>
</dbReference>
<dbReference type="SUPFAM" id="SSF54995">
    <property type="entry name" value="Ribosomal protein S6"/>
    <property type="match status" value="1"/>
</dbReference>
<organism>
    <name type="scientific">Solidesulfovibrio magneticus (strain ATCC 700980 / DSM 13731 / RS-1)</name>
    <name type="common">Desulfovibrio magneticus</name>
    <dbReference type="NCBI Taxonomy" id="573370"/>
    <lineage>
        <taxon>Bacteria</taxon>
        <taxon>Pseudomonadati</taxon>
        <taxon>Thermodesulfobacteriota</taxon>
        <taxon>Desulfovibrionia</taxon>
        <taxon>Desulfovibrionales</taxon>
        <taxon>Desulfovibrionaceae</taxon>
        <taxon>Solidesulfovibrio</taxon>
    </lineage>
</organism>
<comment type="function">
    <text evidence="1">Binds together with bS18 to 16S ribosomal RNA.</text>
</comment>
<comment type="similarity">
    <text evidence="1">Belongs to the bacterial ribosomal protein bS6 family.</text>
</comment>
<accession>C4XGN7</accession>